<name>CAPSP_BPT4</name>
<organismHost>
    <name type="scientific">Escherichia coli</name>
    <dbReference type="NCBI Taxonomy" id="562"/>
</organismHost>
<proteinExistence type="evidence at protein level"/>
<sequence>MAKINELLRESTTTNSNSIGRPNLVALTRATTKLIYSDIVATQRTNQPVAAFYGIKYLNPDNEFTFKTGATYAGEAGYVDREQITELTEESKLTLNKGDLFKYNNIVYKVLEDTPFATIEESDLELALQIAIVLLKVRLFSDAASTSKFESSDSEIADARFQINKWQTAVKSRKLKTGITVELAQDLEANGFDAPNFLEDLLATEMADEINKDILQSLITVSKRYKVTGITDSGFIDLSYASAPEAGRSLYRMVCEMVSHIQKESTYTATFCVASARAAAILAASGWLKHKPEDDKYLSQNAYGFLANGLPLYCDTNSPLDYVIVGVVENIGEKEIVGSIFYAPYTEGLDLDDPEHVGAFKVVVDPESLQPSIGLLVRYALSANPYTVAKDEKEARIIDGGDMDKMAGRSDLSVLLGVKLPKIIIDE</sequence>
<accession>P19896</accession>
<feature type="chain" id="PRO_0000165012" description="Capsid vertex protein">
    <location>
        <begin position="1"/>
        <end position="427"/>
    </location>
</feature>
<feature type="chain" id="PRO_0000430269" description="Mature capsid vertex protein">
    <location>
        <begin position="11"/>
        <end position="427"/>
    </location>
</feature>
<feature type="site" description="Cleavage" evidence="1 3">
    <location>
        <begin position="10"/>
        <end position="11"/>
    </location>
</feature>
<feature type="helix" evidence="8">
    <location>
        <begin position="3"/>
        <end position="12"/>
    </location>
</feature>
<feature type="turn" evidence="9">
    <location>
        <begin position="14"/>
        <end position="16"/>
    </location>
</feature>
<feature type="helix" evidence="8">
    <location>
        <begin position="22"/>
        <end position="34"/>
    </location>
</feature>
<feature type="helix" evidence="8">
    <location>
        <begin position="37"/>
        <end position="39"/>
    </location>
</feature>
<feature type="strand" evidence="8">
    <location>
        <begin position="40"/>
        <end position="42"/>
    </location>
</feature>
<feature type="strand" evidence="8">
    <location>
        <begin position="47"/>
        <end position="55"/>
    </location>
</feature>
<feature type="strand" evidence="9">
    <location>
        <begin position="62"/>
        <end position="64"/>
    </location>
</feature>
<feature type="helix" evidence="9">
    <location>
        <begin position="65"/>
        <end position="68"/>
    </location>
</feature>
<feature type="strand" evidence="9">
    <location>
        <begin position="73"/>
        <end position="76"/>
    </location>
</feature>
<feature type="helix" evidence="9">
    <location>
        <begin position="80"/>
        <end position="83"/>
    </location>
</feature>
<feature type="strand" evidence="9">
    <location>
        <begin position="84"/>
        <end position="86"/>
    </location>
</feature>
<feature type="turn" evidence="8">
    <location>
        <begin position="89"/>
        <end position="94"/>
    </location>
</feature>
<feature type="strand" evidence="8">
    <location>
        <begin position="100"/>
        <end position="103"/>
    </location>
</feature>
<feature type="strand" evidence="8">
    <location>
        <begin position="106"/>
        <end position="110"/>
    </location>
</feature>
<feature type="strand" evidence="8">
    <location>
        <begin position="112"/>
        <end position="114"/>
    </location>
</feature>
<feature type="strand" evidence="8">
    <location>
        <begin position="116"/>
        <end position="118"/>
    </location>
</feature>
<feature type="helix" evidence="8">
    <location>
        <begin position="124"/>
        <end position="133"/>
    </location>
</feature>
<feature type="strand" evidence="8">
    <location>
        <begin position="136"/>
        <end position="139"/>
    </location>
</feature>
<feature type="helix" evidence="9">
    <location>
        <begin position="146"/>
        <end position="148"/>
    </location>
</feature>
<feature type="strand" evidence="9">
    <location>
        <begin position="150"/>
        <end position="153"/>
    </location>
</feature>
<feature type="strand" evidence="8">
    <location>
        <begin position="163"/>
        <end position="169"/>
    </location>
</feature>
<feature type="strand" evidence="8">
    <location>
        <begin position="171"/>
        <end position="180"/>
    </location>
</feature>
<feature type="helix" evidence="8">
    <location>
        <begin position="183"/>
        <end position="189"/>
    </location>
</feature>
<feature type="helix" evidence="8">
    <location>
        <begin position="197"/>
        <end position="221"/>
    </location>
</feature>
<feature type="helix" evidence="8">
    <location>
        <begin position="229"/>
        <end position="233"/>
    </location>
</feature>
<feature type="strand" evidence="9">
    <location>
        <begin position="234"/>
        <end position="237"/>
    </location>
</feature>
<feature type="strand" evidence="9">
    <location>
        <begin position="240"/>
        <end position="243"/>
    </location>
</feature>
<feature type="turn" evidence="9">
    <location>
        <begin position="244"/>
        <end position="247"/>
    </location>
</feature>
<feature type="helix" evidence="8">
    <location>
        <begin position="248"/>
        <end position="264"/>
    </location>
</feature>
<feature type="strand" evidence="8">
    <location>
        <begin position="265"/>
        <end position="267"/>
    </location>
</feature>
<feature type="strand" evidence="8">
    <location>
        <begin position="271"/>
        <end position="274"/>
    </location>
</feature>
<feature type="helix" evidence="8">
    <location>
        <begin position="277"/>
        <end position="280"/>
    </location>
</feature>
<feature type="turn" evidence="8">
    <location>
        <begin position="281"/>
        <end position="286"/>
    </location>
</feature>
<feature type="strand" evidence="8">
    <location>
        <begin position="287"/>
        <end position="290"/>
    </location>
</feature>
<feature type="helix" evidence="9">
    <location>
        <begin position="293"/>
        <end position="298"/>
    </location>
</feature>
<feature type="turn" evidence="9">
    <location>
        <begin position="299"/>
        <end position="301"/>
    </location>
</feature>
<feature type="strand" evidence="8">
    <location>
        <begin position="302"/>
        <end position="306"/>
    </location>
</feature>
<feature type="strand" evidence="8">
    <location>
        <begin position="309"/>
        <end position="314"/>
    </location>
</feature>
<feature type="strand" evidence="9">
    <location>
        <begin position="317"/>
        <end position="320"/>
    </location>
</feature>
<feature type="strand" evidence="8">
    <location>
        <begin position="322"/>
        <end position="326"/>
    </location>
</feature>
<feature type="strand" evidence="8">
    <location>
        <begin position="329"/>
        <end position="331"/>
    </location>
</feature>
<feature type="strand" evidence="8">
    <location>
        <begin position="334"/>
        <end position="337"/>
    </location>
</feature>
<feature type="strand" evidence="8">
    <location>
        <begin position="339"/>
        <end position="349"/>
    </location>
</feature>
<feature type="strand" evidence="8">
    <location>
        <begin position="351"/>
        <end position="354"/>
    </location>
</feature>
<feature type="strand" evidence="8">
    <location>
        <begin position="356"/>
        <end position="370"/>
    </location>
</feature>
<feature type="strand" evidence="8">
    <location>
        <begin position="372"/>
        <end position="383"/>
    </location>
</feature>
<feature type="helix" evidence="8">
    <location>
        <begin position="385"/>
        <end position="387"/>
    </location>
</feature>
<feature type="turn" evidence="8">
    <location>
        <begin position="392"/>
        <end position="397"/>
    </location>
</feature>
<feature type="turn" evidence="8">
    <location>
        <begin position="403"/>
        <end position="405"/>
    </location>
</feature>
<feature type="strand" evidence="8">
    <location>
        <begin position="411"/>
        <end position="417"/>
    </location>
</feature>
<keyword id="KW-0002">3D-structure</keyword>
<keyword id="KW-0167">Capsid protein</keyword>
<keyword id="KW-0426">Late protein</keyword>
<keyword id="KW-1185">Reference proteome</keyword>
<keyword id="KW-0946">Virion</keyword>
<comment type="function">
    <text evidence="1 2 4">Capsid protein that self-associates to form pentons, building the capsid in association with hexamers of the major capsid protein and one dodecamer of the portal protein. The capsid vertex protein self-associates to form 11 pentons, building the T=13 laevo capsid in association with 160 hexamers of the major capsid protein.</text>
</comment>
<comment type="subunit">
    <text evidence="1 2">Homopentamer. Interacts with the portal protein. Interacts with the major capsid protein that forms 160 hexamers.</text>
</comment>
<comment type="subcellular location">
    <molecule>Capsid vertex protein</molecule>
    <subcellularLocation>
        <location>Virion</location>
    </subcellularLocation>
    <text evidence="1 2 4">Part of the capsid icosahedric shell of the immature virion. The capsid contains 55 copies.</text>
</comment>
<comment type="subcellular location">
    <molecule>Mature capsid vertex protein</molecule>
    <subcellularLocation>
        <location>Virion</location>
    </subcellularLocation>
    <text evidence="1 2 4">Part of the capsid icosahedric shell of the mature virion. The capsid contains 55 copies.</text>
</comment>
<comment type="PTM">
    <text evidence="1 3 6">Proteolytic cleavage at the N-terminus by the prohead core protein protease gives rise to the mature capsid vertex protein.</text>
</comment>
<comment type="similarity">
    <text evidence="7">Belongs to the Tevenvirinae capsid vertex family.</text>
</comment>
<organism>
    <name type="scientific">Enterobacteria phage T4</name>
    <name type="common">Bacteriophage T4</name>
    <dbReference type="NCBI Taxonomy" id="10665"/>
    <lineage>
        <taxon>Viruses</taxon>
        <taxon>Duplodnaviria</taxon>
        <taxon>Heunggongvirae</taxon>
        <taxon>Uroviricota</taxon>
        <taxon>Caudoviricetes</taxon>
        <taxon>Straboviridae</taxon>
        <taxon>Tevenvirinae</taxon>
        <taxon>Tequatrovirus</taxon>
    </lineage>
</organism>
<evidence type="ECO:0000255" key="1">
    <source>
        <dbReference type="HAMAP-Rule" id="MF_04113"/>
    </source>
</evidence>
<evidence type="ECO:0000269" key="2">
    <source>
    </source>
</evidence>
<evidence type="ECO:0000269" key="3">
    <source>
    </source>
</evidence>
<evidence type="ECO:0000269" key="4">
    <source>
    </source>
</evidence>
<evidence type="ECO:0000303" key="5">
    <source>
    </source>
</evidence>
<evidence type="ECO:0000303" key="6">
    <source>
    </source>
</evidence>
<evidence type="ECO:0000305" key="7"/>
<evidence type="ECO:0007829" key="8">
    <source>
        <dbReference type="PDB" id="1YUE"/>
    </source>
</evidence>
<evidence type="ECO:0007829" key="9">
    <source>
        <dbReference type="PDB" id="5VF3"/>
    </source>
</evidence>
<protein>
    <recommendedName>
        <fullName evidence="1 5">Capsid vertex protein</fullName>
    </recommendedName>
    <alternativeName>
        <fullName evidence="5">Gene product 24</fullName>
    </alternativeName>
    <alternativeName>
        <fullName evidence="1 5">gp24</fullName>
    </alternativeName>
    <component>
        <recommendedName>
            <fullName evidence="1">Mature capsid vertex protein</fullName>
        </recommendedName>
        <alternativeName>
            <fullName evidence="1">gp24*</fullName>
        </alternativeName>
    </component>
</protein>
<reference key="1">
    <citation type="submission" date="1999-07" db="EMBL/GenBank/DDBJ databases">
        <authorList>
            <person name="Yasuda G."/>
            <person name="Parker M.L."/>
            <person name="Doermann G."/>
        </authorList>
    </citation>
    <scope>NUCLEOTIDE SEQUENCE [GENOMIC DNA]</scope>
    <source>
        <strain>D</strain>
    </source>
</reference>
<reference key="2">
    <citation type="journal article" date="2003" name="Microbiol. Mol. Biol. Rev.">
        <title>Bacteriophage T4 genome.</title>
        <authorList>
            <person name="Miller E.S."/>
            <person name="Kutter E."/>
            <person name="Mosig G."/>
            <person name="Arisaka F."/>
            <person name="Kunisawa T."/>
            <person name="Ruger W."/>
        </authorList>
    </citation>
    <scope>NUCLEOTIDE SEQUENCE [LARGE SCALE GENOMIC DNA]</scope>
</reference>
<reference key="3">
    <citation type="journal article" date="1975" name="J. Mol. Biol.">
        <title>Protein cleavage during virus assembly: characterization of cleavage in T4 phage.</title>
        <authorList>
            <person name="Tsugita A."/>
            <person name="Black L.W."/>
            <person name="Showe M.K."/>
        </authorList>
    </citation>
    <scope>PROTEOLYTIC CLEAVAGE</scope>
</reference>
<reference key="4">
    <citation type="journal article" date="2010" name="Virol. J.">
        <title>Structure and assembly of bacteriophage T4 head.</title>
        <authorList>
            <person name="Rao V.B."/>
            <person name="Black L.W."/>
        </authorList>
    </citation>
    <scope>REVIEW</scope>
</reference>
<reference key="5">
    <citation type="journal article" date="2022" name="Viruses">
        <title>The Beauty of Bacteriophage T4 Research: Lindsay W. Black and the T4 Head Assembly.</title>
        <authorList>
            <person name="Kuhn A."/>
            <person name="Thomas J.A."/>
        </authorList>
    </citation>
    <scope>PROTEOLYTIC CLEAVAGE</scope>
</reference>
<reference key="6">
    <citation type="journal article" date="2001" name="Virology">
        <title>The structure of isometric capsids of bacteriophage T4.</title>
        <authorList>
            <person name="Olson N.H."/>
            <person name="Gingery M."/>
            <person name="Eiserling F.A."/>
            <person name="Baker T.S."/>
        </authorList>
    </citation>
    <scope>STRUCTURE BY ELECTRON MICROSCOPY (15.0 ANGSTROMS)</scope>
    <scope>SUBUNIT</scope>
    <scope>FUNCTION</scope>
    <scope>SUBCELLULAR LOCATION</scope>
</reference>
<reference key="7">
    <citation type="journal article" date="2004" name="Proc. Natl. Acad. Sci. U.S.A.">
        <title>Molecular architecture of the prolate head of bacteriophage T4.</title>
        <authorList>
            <person name="Fokine A."/>
            <person name="Chipman P.R."/>
            <person name="Leiman P.G."/>
            <person name="Mesyanzhinov V.V."/>
            <person name="Rao V.B."/>
            <person name="Rossmann M.G."/>
        </authorList>
    </citation>
    <scope>STRUCTURE BY ELECTRON MICROSCOPY (22.0 ANGSTROMS)</scope>
    <scope>FUNCTION</scope>
    <scope>SUBCELLULAR LOCATION</scope>
</reference>
<reference key="8">
    <citation type="journal article" date="2005" name="Proc. Natl. Acad. Sci. U.S.A.">
        <title>Structural and functional similarities between the capsid proteins of bacteriophages T4 and HK97 point to a common ancestry.</title>
        <authorList>
            <person name="Fokine A."/>
            <person name="Leiman P.G."/>
            <person name="Shneider M.M."/>
            <person name="Ahvazi B."/>
            <person name="Boeshans K.M."/>
            <person name="Steven A.C."/>
            <person name="Black L.W."/>
            <person name="Mesyanzhinov V.V."/>
            <person name="Rossmann M.G."/>
        </authorList>
    </citation>
    <scope>X-RAY CRYSTALLOGRAPHY (2.9 ANGSTROMS)</scope>
</reference>
<gene>
    <name type="primary">24</name>
</gene>
<dbReference type="EMBL" id="AF158101">
    <property type="protein sequence ID" value="AAD42429.1"/>
    <property type="molecule type" value="Genomic_DNA"/>
</dbReference>
<dbReference type="PIR" id="JF0074">
    <property type="entry name" value="GHBP24"/>
</dbReference>
<dbReference type="RefSeq" id="NP_049789.1">
    <property type="nucleotide sequence ID" value="NC_000866.4"/>
</dbReference>
<dbReference type="PDB" id="1YUE">
    <property type="method" value="X-ray"/>
    <property type="resolution" value="2.90 A"/>
    <property type="chains" value="A=1-427"/>
</dbReference>
<dbReference type="PDB" id="5VF3">
    <property type="method" value="EM"/>
    <property type="resolution" value="3.30 A"/>
    <property type="chains" value="a=11-427"/>
</dbReference>
<dbReference type="PDB" id="7VRT">
    <property type="method" value="EM"/>
    <property type="resolution" value="5.10 A"/>
    <property type="chains" value="he/hf/hg/hh/hi/hj/hk/hl/hm/hn/ho=1-427"/>
</dbReference>
<dbReference type="PDB" id="7VS5">
    <property type="method" value="EM"/>
    <property type="resolution" value="3.40 A"/>
    <property type="chains" value="he/hf/hg/hh/hi/hj/hk/hl/hm/hn/ho=1-427"/>
</dbReference>
<dbReference type="PDB" id="8GMO">
    <property type="method" value="EM"/>
    <property type="resolution" value="3.90 A"/>
    <property type="chains" value="A/B/C/D/a=11-425"/>
</dbReference>
<dbReference type="PDBsum" id="1YUE"/>
<dbReference type="PDBsum" id="5VF3"/>
<dbReference type="PDBsum" id="7VRT"/>
<dbReference type="PDBsum" id="7VS5"/>
<dbReference type="PDBsum" id="8GMO"/>
<dbReference type="EMDB" id="EMD-32103"/>
<dbReference type="EMDB" id="EMD-32109"/>
<dbReference type="EMDB" id="EMD-40228"/>
<dbReference type="EMDB" id="EMD-8661"/>
<dbReference type="SMR" id="P19896"/>
<dbReference type="GeneID" id="1258587"/>
<dbReference type="KEGG" id="vg:1258587"/>
<dbReference type="OrthoDB" id="2627at10239"/>
<dbReference type="EvolutionaryTrace" id="P19896"/>
<dbReference type="Proteomes" id="UP000009087">
    <property type="component" value="Segment"/>
</dbReference>
<dbReference type="GO" id="GO:0019028">
    <property type="term" value="C:viral capsid"/>
    <property type="evidence" value="ECO:0007669"/>
    <property type="project" value="UniProtKB-UniRule"/>
</dbReference>
<dbReference type="FunFam" id="2.10.10.40:FF:000001">
    <property type="entry name" value="Capsid vertex protein"/>
    <property type="match status" value="1"/>
</dbReference>
<dbReference type="FunFam" id="3.30.2320.40:FF:000001">
    <property type="entry name" value="Capsid vertex protein"/>
    <property type="match status" value="1"/>
</dbReference>
<dbReference type="Gene3D" id="2.10.10.40">
    <property type="match status" value="1"/>
</dbReference>
<dbReference type="Gene3D" id="3.30.2320.40">
    <property type="match status" value="1"/>
</dbReference>
<dbReference type="HAMAP" id="MF_04113">
    <property type="entry name" value="CAPSID_P_T4"/>
    <property type="match status" value="1"/>
</dbReference>
<dbReference type="InterPro" id="IPR038999">
    <property type="entry name" value="CAPSP"/>
</dbReference>
<dbReference type="InterPro" id="IPR010762">
    <property type="entry name" value="Gp23/Gp24_T4-like"/>
</dbReference>
<dbReference type="Pfam" id="PF07068">
    <property type="entry name" value="Gp23"/>
    <property type="match status" value="1"/>
</dbReference>